<protein>
    <recommendedName>
        <fullName>Cell division cycle 20.1, cofactor of APC complex</fullName>
        <shortName>AtCDC20.1</shortName>
    </recommendedName>
</protein>
<dbReference type="EMBL" id="AF029262">
    <property type="protein sequence ID" value="AAF14048.1"/>
    <property type="molecule type" value="mRNA"/>
</dbReference>
<dbReference type="EMBL" id="AL035678">
    <property type="protein sequence ID" value="CAB38785.1"/>
    <property type="molecule type" value="Genomic_DNA"/>
</dbReference>
<dbReference type="EMBL" id="AL161583">
    <property type="protein sequence ID" value="CAB80044.1"/>
    <property type="molecule type" value="Genomic_DNA"/>
</dbReference>
<dbReference type="EMBL" id="CP002687">
    <property type="protein sequence ID" value="AEE86200.1"/>
    <property type="molecule type" value="Genomic_DNA"/>
</dbReference>
<dbReference type="EMBL" id="AK117888">
    <property type="protein sequence ID" value="BAC42527.1"/>
    <property type="molecule type" value="mRNA"/>
</dbReference>
<dbReference type="EMBL" id="BT026138">
    <property type="protein sequence ID" value="ABG48494.1"/>
    <property type="molecule type" value="mRNA"/>
</dbReference>
<dbReference type="PIR" id="T05978">
    <property type="entry name" value="T05978"/>
</dbReference>
<dbReference type="RefSeq" id="NP_195053.1">
    <molecule id="Q9SZA4-1"/>
    <property type="nucleotide sequence ID" value="NM_119481.3"/>
</dbReference>
<dbReference type="SMR" id="Q9SZA4"/>
<dbReference type="BioGRID" id="14748">
    <property type="interactions" value="22"/>
</dbReference>
<dbReference type="ELM" id="Q9SZA4"/>
<dbReference type="FunCoup" id="Q9SZA4">
    <property type="interactions" value="1958"/>
</dbReference>
<dbReference type="IntAct" id="Q9SZA4">
    <property type="interactions" value="14"/>
</dbReference>
<dbReference type="STRING" id="3702.Q9SZA4"/>
<dbReference type="PaxDb" id="3702-AT4G33270.1"/>
<dbReference type="ProteomicsDB" id="220464">
    <molecule id="Q9SZA4-1"/>
</dbReference>
<dbReference type="EnsemblPlants" id="AT4G33270.1">
    <molecule id="Q9SZA4-1"/>
    <property type="protein sequence ID" value="AT4G33270.1"/>
    <property type="gene ID" value="AT4G33270"/>
</dbReference>
<dbReference type="GeneID" id="829463"/>
<dbReference type="Gramene" id="AT4G33270.1">
    <molecule id="Q9SZA4-1"/>
    <property type="protein sequence ID" value="AT4G33270.1"/>
    <property type="gene ID" value="AT4G33270"/>
</dbReference>
<dbReference type="KEGG" id="ath:AT4G33270"/>
<dbReference type="Araport" id="AT4G33270"/>
<dbReference type="TAIR" id="AT4G33270">
    <property type="gene designation" value="CDC20.1"/>
</dbReference>
<dbReference type="eggNOG" id="KOG0305">
    <property type="taxonomic scope" value="Eukaryota"/>
</dbReference>
<dbReference type="HOGENOM" id="CLU_014831_6_1_1"/>
<dbReference type="InParanoid" id="Q9SZA4"/>
<dbReference type="OMA" id="CSGACLN"/>
<dbReference type="OrthoDB" id="10263272at2759"/>
<dbReference type="PhylomeDB" id="Q9SZA4"/>
<dbReference type="UniPathway" id="UPA00143"/>
<dbReference type="PRO" id="PR:Q9SZA4"/>
<dbReference type="Proteomes" id="UP000006548">
    <property type="component" value="Chromosome 4"/>
</dbReference>
<dbReference type="ExpressionAtlas" id="Q9SZA4">
    <property type="expression patterns" value="baseline and differential"/>
</dbReference>
<dbReference type="GO" id="GO:0033597">
    <property type="term" value="C:mitotic checkpoint complex"/>
    <property type="evidence" value="ECO:0000353"/>
    <property type="project" value="TAIR"/>
</dbReference>
<dbReference type="GO" id="GO:0005634">
    <property type="term" value="C:nucleus"/>
    <property type="evidence" value="ECO:0000314"/>
    <property type="project" value="TAIR"/>
</dbReference>
<dbReference type="GO" id="GO:0010997">
    <property type="term" value="F:anaphase-promoting complex binding"/>
    <property type="evidence" value="ECO:0007669"/>
    <property type="project" value="InterPro"/>
</dbReference>
<dbReference type="GO" id="GO:0019900">
    <property type="term" value="F:kinase binding"/>
    <property type="evidence" value="ECO:0000353"/>
    <property type="project" value="UniProtKB"/>
</dbReference>
<dbReference type="GO" id="GO:0097027">
    <property type="term" value="F:ubiquitin-protein transferase activator activity"/>
    <property type="evidence" value="ECO:0007669"/>
    <property type="project" value="InterPro"/>
</dbReference>
<dbReference type="GO" id="GO:0051301">
    <property type="term" value="P:cell division"/>
    <property type="evidence" value="ECO:0007669"/>
    <property type="project" value="UniProtKB-KW"/>
</dbReference>
<dbReference type="GO" id="GO:0016567">
    <property type="term" value="P:protein ubiquitination"/>
    <property type="evidence" value="ECO:0007669"/>
    <property type="project" value="UniProtKB-UniPathway"/>
</dbReference>
<dbReference type="CDD" id="cd00200">
    <property type="entry name" value="WD40"/>
    <property type="match status" value="1"/>
</dbReference>
<dbReference type="FunFam" id="2.130.10.10:FF:000224">
    <property type="entry name" value="cell division cycle protein 20 homolog"/>
    <property type="match status" value="1"/>
</dbReference>
<dbReference type="Gene3D" id="2.130.10.10">
    <property type="entry name" value="YVTN repeat-like/Quinoprotein amine dehydrogenase"/>
    <property type="match status" value="1"/>
</dbReference>
<dbReference type="InterPro" id="IPR033010">
    <property type="entry name" value="Cdc20/Fizzy"/>
</dbReference>
<dbReference type="InterPro" id="IPR015943">
    <property type="entry name" value="WD40/YVTN_repeat-like_dom_sf"/>
</dbReference>
<dbReference type="InterPro" id="IPR056150">
    <property type="entry name" value="WD40_CDC20-Fz"/>
</dbReference>
<dbReference type="InterPro" id="IPR019775">
    <property type="entry name" value="WD40_repeat_CS"/>
</dbReference>
<dbReference type="InterPro" id="IPR036322">
    <property type="entry name" value="WD40_repeat_dom_sf"/>
</dbReference>
<dbReference type="InterPro" id="IPR001680">
    <property type="entry name" value="WD40_rpt"/>
</dbReference>
<dbReference type="PANTHER" id="PTHR19918">
    <property type="entry name" value="CELL DIVISION CYCLE 20 CDC20 FIZZY -RELATED"/>
    <property type="match status" value="1"/>
</dbReference>
<dbReference type="PANTHER" id="PTHR19918:SF8">
    <property type="entry name" value="FI02843P"/>
    <property type="match status" value="1"/>
</dbReference>
<dbReference type="Pfam" id="PF24807">
    <property type="entry name" value="WD40_CDC20-Fz"/>
    <property type="match status" value="1"/>
</dbReference>
<dbReference type="SMART" id="SM00320">
    <property type="entry name" value="WD40"/>
    <property type="match status" value="7"/>
</dbReference>
<dbReference type="SUPFAM" id="SSF50978">
    <property type="entry name" value="WD40 repeat-like"/>
    <property type="match status" value="1"/>
</dbReference>
<dbReference type="PROSITE" id="PS00678">
    <property type="entry name" value="WD_REPEATS_1"/>
    <property type="match status" value="3"/>
</dbReference>
<dbReference type="PROSITE" id="PS50082">
    <property type="entry name" value="WD_REPEATS_2"/>
    <property type="match status" value="4"/>
</dbReference>
<dbReference type="PROSITE" id="PS50294">
    <property type="entry name" value="WD_REPEATS_REGION"/>
    <property type="match status" value="1"/>
</dbReference>
<organism>
    <name type="scientific">Arabidopsis thaliana</name>
    <name type="common">Mouse-ear cress</name>
    <dbReference type="NCBI Taxonomy" id="3702"/>
    <lineage>
        <taxon>Eukaryota</taxon>
        <taxon>Viridiplantae</taxon>
        <taxon>Streptophyta</taxon>
        <taxon>Embryophyta</taxon>
        <taxon>Tracheophyta</taxon>
        <taxon>Spermatophyta</taxon>
        <taxon>Magnoliopsida</taxon>
        <taxon>eudicotyledons</taxon>
        <taxon>Gunneridae</taxon>
        <taxon>Pentapetalae</taxon>
        <taxon>rosids</taxon>
        <taxon>malvids</taxon>
        <taxon>Brassicales</taxon>
        <taxon>Brassicaceae</taxon>
        <taxon>Camelineae</taxon>
        <taxon>Arabidopsis</taxon>
    </lineage>
</organism>
<sequence length="457" mass="50551">MDAGMNNTSSHYKTQARCPLQEHFLPRKPSKENLDRFIPNRSAMNFDYAHFALTEGRKGKDQTAAVSSPSKEAYRKQLAETMNLNHTRILAFRNKPQAPVELLPSNHSASLHQQPKSVKPRRYIPQTSERTLDAPDIVDDFYLNLLDWGSANVLAIALDHTVYLWDASTGSTSELVTIDEEKGPVTSINWAPDGRHVAVGLNNSEVQLWDSASNRQLRTLKGGHQSRVGSLAWNNHILTTGGMDGLIINNDVRIRSPIVETYRGHTQEVCGLKWSGSGQQLASGGNDNVVHIWDRSVASSNSTTQWLHRLEEHTSAVKALAWCPFQANLLATGGGGGDRTIKFWNTHTGACLNSVDTGSQVCSLLWSKNERELLSSHGFTQNQLTLWKYPSMVKMAELTGHTSRVLYMAQSPDGCTVASAAGDETLRFWNVFGVPETAKKAAPKAVSEPFSHVNRIR</sequence>
<name>CDC21_ARATH</name>
<comment type="function">
    <text evidence="1 2">Component of the anaphase promoting complex/cyclosome (APC/C), a cell cycle-regulated E3 ubiquitin-protein ligase complex that controls progression through mitosis and the G1 phase of the cell cycle.</text>
</comment>
<comment type="pathway">
    <text>Protein modification; protein ubiquitination.</text>
</comment>
<comment type="subunit">
    <text evidence="1 2 3 4 5">The APC/C is composed of at least 11 subunits that stay tightly associated throughout the cell cycle (By similarity). Interacts with APC10, FZR1, FZR2, FZR3 (PubMed:21687678). Binds to GIG1 and PYM (PubMed:22167058, PubMed:22844260). Part of the mitotic checkpoint complex (MCC); interacts with MAD2, BUB3.1, BUBR1 and BUB1 (PubMed:21687678). Binds to cyclins CYCA1-2, CYCB2-1 and CYCB2-2 (PubMed:21687678). Interacts with PANS1 (PubMed:24206843).</text>
</comment>
<comment type="interaction">
    <interactant intactId="EBI-1668707">
        <id>Q9SZA4</id>
    </interactant>
    <interactant intactId="EBI-1668733">
        <id>Q8LGU6</id>
        <label>CDC27B</label>
    </interactant>
    <organismsDiffer>false</organismsDiffer>
    <experiments>2</experiments>
</comment>
<comment type="subcellular location">
    <subcellularLocation>
        <location evidence="2">Nucleus</location>
    </subcellularLocation>
</comment>
<comment type="alternative products">
    <event type="alternative splicing"/>
    <isoform>
        <id>Q9SZA4-1</id>
        <name>1</name>
        <sequence type="displayed"/>
    </isoform>
    <isoform>
        <id>Q9SZA4-2</id>
        <name>2</name>
        <sequence type="described" ref="VSP_047672"/>
    </isoform>
</comment>
<comment type="tissue specificity">
    <text evidence="2">Expressed in meristems and organ primordia. Present in flowers, leaves, stems, roots, pollen grains and developing seeds.</text>
</comment>
<comment type="induction">
    <text evidence="2">Expression starts to rise in the S-phase and peaks in the M-phase with a non-negligible basic expression level also in the other cell cycle phases.</text>
</comment>
<comment type="disruption phenotype">
    <text evidence="2">Delay in plant development due to reduced cell number and male sterility.</text>
</comment>
<comment type="similarity">
    <text evidence="7">Belongs to the WD repeat CDC20/Fizzy family.</text>
</comment>
<comment type="online information" name="Arabidopsis APC/C subunits">
    <link uri="http://personal.rhul.ac.uk/ujba/110/apc/APC.htm"/>
</comment>
<feature type="chain" id="PRO_0000423306" description="Cell division cycle 20.1, cofactor of APC complex">
    <location>
        <begin position="1"/>
        <end position="457"/>
    </location>
</feature>
<feature type="repeat" description="WD 1">
    <location>
        <begin position="138"/>
        <end position="175"/>
    </location>
</feature>
<feature type="repeat" description="WD 2">
    <location>
        <begin position="180"/>
        <end position="219"/>
    </location>
</feature>
<feature type="repeat" description="WD 3">
    <location>
        <begin position="223"/>
        <end position="260"/>
    </location>
</feature>
<feature type="repeat" description="WD 4">
    <location>
        <begin position="264"/>
        <end position="303"/>
    </location>
</feature>
<feature type="repeat" description="WD 5">
    <location>
        <begin position="312"/>
        <end position="354"/>
    </location>
</feature>
<feature type="repeat" description="WD 6">
    <location>
        <begin position="356"/>
        <end position="397"/>
    </location>
</feature>
<feature type="repeat" description="WD 7">
    <location>
        <begin position="400"/>
        <end position="439"/>
    </location>
</feature>
<feature type="splice variant" id="VSP_047672" description="In isoform 2." evidence="6">
    <location>
        <begin position="1"/>
        <end position="242"/>
    </location>
</feature>
<feature type="sequence conflict" description="In Ref. 1; AAF14048." evidence="7" ref="1">
    <original>AAPKAVSEPFSHVNRIR</original>
    <variation>SCSKSSFRAIFSRESYSLKL</variation>
    <location>
        <begin position="441"/>
        <end position="457"/>
    </location>
</feature>
<accession>Q9SZA4</accession>
<accession>Q8GY38</accession>
<accession>Q9SQK2</accession>
<gene>
    <name type="primary">CDC20-1</name>
    <name type="synonym">CDC20_2</name>
    <name type="ordered locus">At4g33270</name>
    <name type="ORF">F17M5.30</name>
</gene>
<proteinExistence type="evidence at protein level"/>
<reference key="1">
    <citation type="submission" date="1997-10" db="EMBL/GenBank/DDBJ databases">
        <authorList>
            <person name="Arioli T."/>
        </authorList>
    </citation>
    <scope>NUCLEOTIDE SEQUENCE [MRNA]</scope>
    <source>
        <strain>cv. Columbia</strain>
    </source>
</reference>
<reference key="2">
    <citation type="journal article" date="1999" name="Nature">
        <title>Sequence and analysis of chromosome 4 of the plant Arabidopsis thaliana.</title>
        <authorList>
            <person name="Mayer K.F.X."/>
            <person name="Schueller C."/>
            <person name="Wambutt R."/>
            <person name="Murphy G."/>
            <person name="Volckaert G."/>
            <person name="Pohl T."/>
            <person name="Duesterhoeft A."/>
            <person name="Stiekema W."/>
            <person name="Entian K.-D."/>
            <person name="Terryn N."/>
            <person name="Harris B."/>
            <person name="Ansorge W."/>
            <person name="Brandt P."/>
            <person name="Grivell L.A."/>
            <person name="Rieger M."/>
            <person name="Weichselgartner M."/>
            <person name="de Simone V."/>
            <person name="Obermaier B."/>
            <person name="Mache R."/>
            <person name="Mueller M."/>
            <person name="Kreis M."/>
            <person name="Delseny M."/>
            <person name="Puigdomenech P."/>
            <person name="Watson M."/>
            <person name="Schmidtheini T."/>
            <person name="Reichert B."/>
            <person name="Portetelle D."/>
            <person name="Perez-Alonso M."/>
            <person name="Boutry M."/>
            <person name="Bancroft I."/>
            <person name="Vos P."/>
            <person name="Hoheisel J."/>
            <person name="Zimmermann W."/>
            <person name="Wedler H."/>
            <person name="Ridley P."/>
            <person name="Langham S.-A."/>
            <person name="McCullagh B."/>
            <person name="Bilham L."/>
            <person name="Robben J."/>
            <person name="van der Schueren J."/>
            <person name="Grymonprez B."/>
            <person name="Chuang Y.-J."/>
            <person name="Vandenbussche F."/>
            <person name="Braeken M."/>
            <person name="Weltjens I."/>
            <person name="Voet M."/>
            <person name="Bastiaens I."/>
            <person name="Aert R."/>
            <person name="Defoor E."/>
            <person name="Weitzenegger T."/>
            <person name="Bothe G."/>
            <person name="Ramsperger U."/>
            <person name="Hilbert H."/>
            <person name="Braun M."/>
            <person name="Holzer E."/>
            <person name="Brandt A."/>
            <person name="Peters S."/>
            <person name="van Staveren M."/>
            <person name="Dirkse W."/>
            <person name="Mooijman P."/>
            <person name="Klein Lankhorst R."/>
            <person name="Rose M."/>
            <person name="Hauf J."/>
            <person name="Koetter P."/>
            <person name="Berneiser S."/>
            <person name="Hempel S."/>
            <person name="Feldpausch M."/>
            <person name="Lamberth S."/>
            <person name="Van den Daele H."/>
            <person name="De Keyser A."/>
            <person name="Buysshaert C."/>
            <person name="Gielen J."/>
            <person name="Villarroel R."/>
            <person name="De Clercq R."/>
            <person name="van Montagu M."/>
            <person name="Rogers J."/>
            <person name="Cronin A."/>
            <person name="Quail M.A."/>
            <person name="Bray-Allen S."/>
            <person name="Clark L."/>
            <person name="Doggett J."/>
            <person name="Hall S."/>
            <person name="Kay M."/>
            <person name="Lennard N."/>
            <person name="McLay K."/>
            <person name="Mayes R."/>
            <person name="Pettett A."/>
            <person name="Rajandream M.A."/>
            <person name="Lyne M."/>
            <person name="Benes V."/>
            <person name="Rechmann S."/>
            <person name="Borkova D."/>
            <person name="Bloecker H."/>
            <person name="Scharfe M."/>
            <person name="Grimm M."/>
            <person name="Loehnert T.-H."/>
            <person name="Dose S."/>
            <person name="de Haan M."/>
            <person name="Maarse A.C."/>
            <person name="Schaefer M."/>
            <person name="Mueller-Auer S."/>
            <person name="Gabel C."/>
            <person name="Fuchs M."/>
            <person name="Fartmann B."/>
            <person name="Granderath K."/>
            <person name="Dauner D."/>
            <person name="Herzl A."/>
            <person name="Neumann S."/>
            <person name="Argiriou A."/>
            <person name="Vitale D."/>
            <person name="Liguori R."/>
            <person name="Piravandi E."/>
            <person name="Massenet O."/>
            <person name="Quigley F."/>
            <person name="Clabauld G."/>
            <person name="Muendlein A."/>
            <person name="Felber R."/>
            <person name="Schnabl S."/>
            <person name="Hiller R."/>
            <person name="Schmidt W."/>
            <person name="Lecharny A."/>
            <person name="Aubourg S."/>
            <person name="Chefdor F."/>
            <person name="Cooke R."/>
            <person name="Berger C."/>
            <person name="Monfort A."/>
            <person name="Casacuberta E."/>
            <person name="Gibbons T."/>
            <person name="Weber N."/>
            <person name="Vandenbol M."/>
            <person name="Bargues M."/>
            <person name="Terol J."/>
            <person name="Torres A."/>
            <person name="Perez-Perez A."/>
            <person name="Purnelle B."/>
            <person name="Bent E."/>
            <person name="Johnson S."/>
            <person name="Tacon D."/>
            <person name="Jesse T."/>
            <person name="Heijnen L."/>
            <person name="Schwarz S."/>
            <person name="Scholler P."/>
            <person name="Heber S."/>
            <person name="Francs P."/>
            <person name="Bielke C."/>
            <person name="Frishman D."/>
            <person name="Haase D."/>
            <person name="Lemcke K."/>
            <person name="Mewes H.-W."/>
            <person name="Stocker S."/>
            <person name="Zaccaria P."/>
            <person name="Bevan M."/>
            <person name="Wilson R.K."/>
            <person name="de la Bastide M."/>
            <person name="Habermann K."/>
            <person name="Parnell L."/>
            <person name="Dedhia N."/>
            <person name="Gnoj L."/>
            <person name="Schutz K."/>
            <person name="Huang E."/>
            <person name="Spiegel L."/>
            <person name="Sekhon M."/>
            <person name="Murray J."/>
            <person name="Sheet P."/>
            <person name="Cordes M."/>
            <person name="Abu-Threideh J."/>
            <person name="Stoneking T."/>
            <person name="Kalicki J."/>
            <person name="Graves T."/>
            <person name="Harmon G."/>
            <person name="Edwards J."/>
            <person name="Latreille P."/>
            <person name="Courtney L."/>
            <person name="Cloud J."/>
            <person name="Abbott A."/>
            <person name="Scott K."/>
            <person name="Johnson D."/>
            <person name="Minx P."/>
            <person name="Bentley D."/>
            <person name="Fulton B."/>
            <person name="Miller N."/>
            <person name="Greco T."/>
            <person name="Kemp K."/>
            <person name="Kramer J."/>
            <person name="Fulton L."/>
            <person name="Mardis E."/>
            <person name="Dante M."/>
            <person name="Pepin K."/>
            <person name="Hillier L.W."/>
            <person name="Nelson J."/>
            <person name="Spieth J."/>
            <person name="Ryan E."/>
            <person name="Andrews S."/>
            <person name="Geisel C."/>
            <person name="Layman D."/>
            <person name="Du H."/>
            <person name="Ali J."/>
            <person name="Berghoff A."/>
            <person name="Jones K."/>
            <person name="Drone K."/>
            <person name="Cotton M."/>
            <person name="Joshu C."/>
            <person name="Antonoiu B."/>
            <person name="Zidanic M."/>
            <person name="Strong C."/>
            <person name="Sun H."/>
            <person name="Lamar B."/>
            <person name="Yordan C."/>
            <person name="Ma P."/>
            <person name="Zhong J."/>
            <person name="Preston R."/>
            <person name="Vil D."/>
            <person name="Shekher M."/>
            <person name="Matero A."/>
            <person name="Shah R."/>
            <person name="Swaby I.K."/>
            <person name="O'Shaughnessy A."/>
            <person name="Rodriguez M."/>
            <person name="Hoffman J."/>
            <person name="Till S."/>
            <person name="Granat S."/>
            <person name="Shohdy N."/>
            <person name="Hasegawa A."/>
            <person name="Hameed A."/>
            <person name="Lodhi M."/>
            <person name="Johnson A."/>
            <person name="Chen E."/>
            <person name="Marra M.A."/>
            <person name="Martienssen R."/>
            <person name="McCombie W.R."/>
        </authorList>
    </citation>
    <scope>NUCLEOTIDE SEQUENCE [LARGE SCALE GENOMIC DNA]</scope>
    <source>
        <strain>cv. Columbia</strain>
    </source>
</reference>
<reference key="3">
    <citation type="journal article" date="2017" name="Plant J.">
        <title>Araport11: a complete reannotation of the Arabidopsis thaliana reference genome.</title>
        <authorList>
            <person name="Cheng C.Y."/>
            <person name="Krishnakumar V."/>
            <person name="Chan A.P."/>
            <person name="Thibaud-Nissen F."/>
            <person name="Schobel S."/>
            <person name="Town C.D."/>
        </authorList>
    </citation>
    <scope>GENOME REANNOTATION</scope>
    <source>
        <strain>cv. Columbia</strain>
    </source>
</reference>
<reference key="4">
    <citation type="journal article" date="2002" name="Science">
        <title>Functional annotation of a full-length Arabidopsis cDNA collection.</title>
        <authorList>
            <person name="Seki M."/>
            <person name="Narusaka M."/>
            <person name="Kamiya A."/>
            <person name="Ishida J."/>
            <person name="Satou M."/>
            <person name="Sakurai T."/>
            <person name="Nakajima M."/>
            <person name="Enju A."/>
            <person name="Akiyama K."/>
            <person name="Oono Y."/>
            <person name="Muramatsu M."/>
            <person name="Hayashizaki Y."/>
            <person name="Kawai J."/>
            <person name="Carninci P."/>
            <person name="Itoh M."/>
            <person name="Ishii Y."/>
            <person name="Arakawa T."/>
            <person name="Shibata K."/>
            <person name="Shinagawa A."/>
            <person name="Shinozaki K."/>
        </authorList>
    </citation>
    <scope>NUCLEOTIDE SEQUENCE [LARGE SCALE MRNA] (ISOFORM 2)</scope>
    <source>
        <strain>cv. Columbia</strain>
    </source>
</reference>
<reference key="5">
    <citation type="submission" date="2006-07" db="EMBL/GenBank/DDBJ databases">
        <title>Arabidopsis ORF clones.</title>
        <authorList>
            <person name="Kim C.J."/>
            <person name="Chen H."/>
            <person name="Quinitio C."/>
            <person name="Shinn P."/>
            <person name="Ecker J.R."/>
        </authorList>
    </citation>
    <scope>NUCLEOTIDE SEQUENCE [LARGE SCALE MRNA] (ISOFORM 1)</scope>
    <source>
        <strain>cv. Columbia</strain>
    </source>
</reference>
<reference key="6">
    <citation type="journal article" date="2003" name="Trends Plant Sci.">
        <title>First glance at the plant APC/C, a highly conserved ubiquitin-protein ligase.</title>
        <authorList>
            <person name="Capron A."/>
            <person name="Okresz L."/>
            <person name="Genschik P."/>
        </authorList>
    </citation>
    <scope>REVIEW</scope>
</reference>
<reference key="7">
    <citation type="journal article" date="2010" name="BMC Plant Biol.">
        <title>Genomic evolution and complexity of the Anaphase-promoting Complex (APC) in land plants.</title>
        <authorList>
            <person name="Lima M.D.F."/>
            <person name="Eloy N.B."/>
            <person name="Pegoraro C."/>
            <person name="Sagit R."/>
            <person name="Rojas C."/>
            <person name="Bretz T."/>
            <person name="Vargas L."/>
            <person name="Elofsson A."/>
            <person name="de Oliveira A.C."/>
            <person name="Hemerly A.S."/>
            <person name="Ferreira P.C.G."/>
        </authorList>
    </citation>
    <scope>REVIEW</scope>
    <scope>GENE FAMILY</scope>
</reference>
<reference key="8">
    <citation type="journal article" date="2011" name="Plant Cell">
        <title>GIGAS CELL1, a novel negative regulator of the anaphase-promoting complex/cyclosome, is required for proper mitotic progression and cell fate determination in Arabidopsis.</title>
        <authorList>
            <person name="Iwata E."/>
            <person name="Ikeda S."/>
            <person name="Matsunaga S."/>
            <person name="Kurata M."/>
            <person name="Yoshioka Y."/>
            <person name="Criqui M.-C."/>
            <person name="Genschik P."/>
            <person name="Ito M."/>
        </authorList>
    </citation>
    <scope>INTERACTION WITH GIG1 AND PYM</scope>
</reference>
<reference key="9">
    <citation type="journal article" date="2011" name="PLoS ONE">
        <title>Conserved CDC20 cell cycle functions are carried out by two of the five isoforms in Arabidopsis thaliana.</title>
        <authorList>
            <person name="Kevei Z."/>
            <person name="Baloban M."/>
            <person name="Da Ines O."/>
            <person name="Tiricz H."/>
            <person name="Kroll A."/>
            <person name="Regulski K."/>
            <person name="Mergaert P."/>
            <person name="Kondorosi E."/>
        </authorList>
    </citation>
    <scope>FUNCTION</scope>
    <scope>DISRUPTION PHENOTYPE</scope>
    <scope>TISSUE SPECIFICITY</scope>
    <scope>SUBCELLULAR LOCATION</scope>
    <scope>INTERACTION WITH CYCA1-2; CYCB2-1; CYCB2-2; APC10; FZR1; FZR2; FZR3; MAD2; BUB3.1; BUBR1 AND BUB1</scope>
    <scope>INDUCTION</scope>
</reference>
<reference key="10">
    <citation type="journal article" date="2012" name="PLoS Genet.">
        <title>OSD1 promotes meiotic progression via APC/C inhibition and forms a regulatory network with TDM and CYCA1;2/TAM.</title>
        <authorList>
            <person name="Cromer L."/>
            <person name="Heyman J."/>
            <person name="Touati S."/>
            <person name="Harashima H."/>
            <person name="Araou E."/>
            <person name="Girard C."/>
            <person name="Horlow C."/>
            <person name="Wassmann K."/>
            <person name="Schnittger A."/>
            <person name="De Veylder L."/>
            <person name="Mercier R."/>
        </authorList>
    </citation>
    <scope>INTERACTION WITH GIG1</scope>
</reference>
<reference key="11">
    <citation type="journal article" date="2013" name="Curr. Biol.">
        <title>Centromeric cohesion is protected twice at meiosis, by SHUGOSHINs at anaphase I and by PATRONUS at interkinesis.</title>
        <authorList>
            <person name="Cromer L."/>
            <person name="Jolivet S."/>
            <person name="Horlow C."/>
            <person name="Chelysheva L."/>
            <person name="Heyman J."/>
            <person name="De Jaeger G."/>
            <person name="Koncz C."/>
            <person name="De Veylder L."/>
            <person name="Mercier R."/>
        </authorList>
    </citation>
    <scope>INTERACTION WITH PANS1</scope>
</reference>
<keyword id="KW-0025">Alternative splicing</keyword>
<keyword id="KW-0131">Cell cycle</keyword>
<keyword id="KW-0132">Cell division</keyword>
<keyword id="KW-0498">Mitosis</keyword>
<keyword id="KW-0539">Nucleus</keyword>
<keyword id="KW-1185">Reference proteome</keyword>
<keyword id="KW-0677">Repeat</keyword>
<keyword id="KW-0833">Ubl conjugation pathway</keyword>
<keyword id="KW-0853">WD repeat</keyword>
<evidence type="ECO:0000250" key="1"/>
<evidence type="ECO:0000269" key="2">
    <source>
    </source>
</evidence>
<evidence type="ECO:0000269" key="3">
    <source>
    </source>
</evidence>
<evidence type="ECO:0000269" key="4">
    <source>
    </source>
</evidence>
<evidence type="ECO:0000269" key="5">
    <source>
    </source>
</evidence>
<evidence type="ECO:0000303" key="6">
    <source>
    </source>
</evidence>
<evidence type="ECO:0000305" key="7"/>